<feature type="chain" id="PRO_1000188969" description="G/U mismatch-specific DNA glycosylase">
    <location>
        <begin position="1"/>
        <end position="168"/>
    </location>
</feature>
<proteinExistence type="inferred from homology"/>
<dbReference type="EC" id="3.2.2.28" evidence="1"/>
<dbReference type="EMBL" id="FM200053">
    <property type="protein sequence ID" value="CAR61124.1"/>
    <property type="molecule type" value="Genomic_DNA"/>
</dbReference>
<dbReference type="RefSeq" id="WP_000237776.1">
    <property type="nucleotide sequence ID" value="NC_011147.1"/>
</dbReference>
<dbReference type="SMR" id="B5BG24"/>
<dbReference type="KEGG" id="sek:SSPA2877"/>
<dbReference type="HOGENOM" id="CLU_042829_3_1_6"/>
<dbReference type="Proteomes" id="UP000001869">
    <property type="component" value="Chromosome"/>
</dbReference>
<dbReference type="GO" id="GO:0005737">
    <property type="term" value="C:cytoplasm"/>
    <property type="evidence" value="ECO:0007669"/>
    <property type="project" value="UniProtKB-SubCell"/>
</dbReference>
<dbReference type="GO" id="GO:0003677">
    <property type="term" value="F:DNA binding"/>
    <property type="evidence" value="ECO:0007669"/>
    <property type="project" value="UniProtKB-KW"/>
</dbReference>
<dbReference type="GO" id="GO:0008263">
    <property type="term" value="F:pyrimidine-specific mismatch base pair DNA N-glycosylase activity"/>
    <property type="evidence" value="ECO:0007669"/>
    <property type="project" value="UniProtKB-UniRule"/>
</dbReference>
<dbReference type="GO" id="GO:0004844">
    <property type="term" value="F:uracil DNA N-glycosylase activity"/>
    <property type="evidence" value="ECO:0007669"/>
    <property type="project" value="TreeGrafter"/>
</dbReference>
<dbReference type="GO" id="GO:0006285">
    <property type="term" value="P:base-excision repair, AP site formation"/>
    <property type="evidence" value="ECO:0007669"/>
    <property type="project" value="UniProtKB-UniRule"/>
</dbReference>
<dbReference type="CDD" id="cd10028">
    <property type="entry name" value="UDG-F2_TDG_MUG"/>
    <property type="match status" value="1"/>
</dbReference>
<dbReference type="Gene3D" id="3.40.470.10">
    <property type="entry name" value="Uracil-DNA glycosylase-like domain"/>
    <property type="match status" value="1"/>
</dbReference>
<dbReference type="HAMAP" id="MF_01956">
    <property type="entry name" value="MUG"/>
    <property type="match status" value="1"/>
</dbReference>
<dbReference type="InterPro" id="IPR015637">
    <property type="entry name" value="MUG/TDG"/>
</dbReference>
<dbReference type="InterPro" id="IPR023502">
    <property type="entry name" value="MUG_bact"/>
</dbReference>
<dbReference type="InterPro" id="IPR005122">
    <property type="entry name" value="Uracil-DNA_glycosylase-like"/>
</dbReference>
<dbReference type="InterPro" id="IPR036895">
    <property type="entry name" value="Uracil-DNA_glycosylase-like_sf"/>
</dbReference>
<dbReference type="NCBIfam" id="NF007570">
    <property type="entry name" value="PRK10201.1"/>
    <property type="match status" value="1"/>
</dbReference>
<dbReference type="PANTHER" id="PTHR12159">
    <property type="entry name" value="G/T AND G/U MISMATCH-SPECIFIC DNA GLYCOSYLASE"/>
    <property type="match status" value="1"/>
</dbReference>
<dbReference type="PANTHER" id="PTHR12159:SF9">
    <property type="entry name" value="G_T MISMATCH-SPECIFIC THYMINE DNA GLYCOSYLASE"/>
    <property type="match status" value="1"/>
</dbReference>
<dbReference type="Pfam" id="PF03167">
    <property type="entry name" value="UDG"/>
    <property type="match status" value="1"/>
</dbReference>
<dbReference type="SUPFAM" id="SSF52141">
    <property type="entry name" value="Uracil-DNA glycosylase-like"/>
    <property type="match status" value="1"/>
</dbReference>
<sequence length="168" mass="18650">MVKDILAPGLRVVFCGINPGLSSANTGFPFAHPANRFWKVIHLAGFTDRQLKPEEAEKLLDFRCGVTKLVDRPTVQATEVKLHELRSGGRNLIEKIEDYQPAALAVLGKQAFEQGFSQRGIAWGKQKIAIGATMVWVLPNPSGLNRIKTEKLVEAYRELDQALIMRGL</sequence>
<evidence type="ECO:0000255" key="1">
    <source>
        <dbReference type="HAMAP-Rule" id="MF_01956"/>
    </source>
</evidence>
<comment type="function">
    <text evidence="1">Excises ethenocytosine and uracil, which can arise by alkylation or deamination of cytosine, respectively, from the corresponding mispairs with guanine in ds-DNA. It is capable of hydrolyzing the carbon-nitrogen bond between the sugar-phosphate backbone of the DNA and the mispaired base. The complementary strand guanine functions in substrate recognition. Required for DNA damage lesion repair in stationary-phase cells.</text>
</comment>
<comment type="catalytic activity">
    <reaction evidence="1">
        <text>Specifically hydrolyzes mismatched double-stranded DNA and polynucleotides, releasing free uracil.</text>
        <dbReference type="EC" id="3.2.2.28"/>
    </reaction>
</comment>
<comment type="subunit">
    <text evidence="1">Binds DNA as a monomer.</text>
</comment>
<comment type="subcellular location">
    <subcellularLocation>
        <location evidence="1">Cytoplasm</location>
    </subcellularLocation>
</comment>
<comment type="similarity">
    <text evidence="1">Belongs to the uracil-DNA glycosylase (UDG) superfamily. TDG/mug family.</text>
</comment>
<keyword id="KW-0963">Cytoplasm</keyword>
<keyword id="KW-0227">DNA damage</keyword>
<keyword id="KW-0228">DNA excision</keyword>
<keyword id="KW-0234">DNA repair</keyword>
<keyword id="KW-0238">DNA-binding</keyword>
<keyword id="KW-0378">Hydrolase</keyword>
<reference key="1">
    <citation type="journal article" date="2009" name="BMC Genomics">
        <title>Pseudogene accumulation in the evolutionary histories of Salmonella enterica serovars Paratyphi A and Typhi.</title>
        <authorList>
            <person name="Holt K.E."/>
            <person name="Thomson N.R."/>
            <person name="Wain J."/>
            <person name="Langridge G.C."/>
            <person name="Hasan R."/>
            <person name="Bhutta Z.A."/>
            <person name="Quail M.A."/>
            <person name="Norbertczak H."/>
            <person name="Walker D."/>
            <person name="Simmonds M."/>
            <person name="White B."/>
            <person name="Bason N."/>
            <person name="Mungall K."/>
            <person name="Dougan G."/>
            <person name="Parkhill J."/>
        </authorList>
    </citation>
    <scope>NUCLEOTIDE SEQUENCE [LARGE SCALE GENOMIC DNA]</scope>
    <source>
        <strain>AKU_12601</strain>
    </source>
</reference>
<protein>
    <recommendedName>
        <fullName evidence="1">G/U mismatch-specific DNA glycosylase</fullName>
        <ecNumber evidence="1">3.2.2.28</ecNumber>
    </recommendedName>
    <alternativeName>
        <fullName evidence="1">Double-strand-specific uracil glycosylase</fullName>
    </alternativeName>
    <alternativeName>
        <fullName evidence="1">Mismatch-specific uracil DNA-glycosylase</fullName>
        <shortName evidence="1">MUG</shortName>
    </alternativeName>
</protein>
<name>MUG_SALPK</name>
<accession>B5BG24</accession>
<gene>
    <name evidence="1" type="primary">mug</name>
    <name type="ordered locus">SSPA2877</name>
</gene>
<organism>
    <name type="scientific">Salmonella paratyphi A (strain AKU_12601)</name>
    <dbReference type="NCBI Taxonomy" id="554290"/>
    <lineage>
        <taxon>Bacteria</taxon>
        <taxon>Pseudomonadati</taxon>
        <taxon>Pseudomonadota</taxon>
        <taxon>Gammaproteobacteria</taxon>
        <taxon>Enterobacterales</taxon>
        <taxon>Enterobacteriaceae</taxon>
        <taxon>Salmonella</taxon>
    </lineage>
</organism>